<organism>
    <name type="scientific">Caulobacter sp. (strain K31)</name>
    <dbReference type="NCBI Taxonomy" id="366602"/>
    <lineage>
        <taxon>Bacteria</taxon>
        <taxon>Pseudomonadati</taxon>
        <taxon>Pseudomonadota</taxon>
        <taxon>Alphaproteobacteria</taxon>
        <taxon>Caulobacterales</taxon>
        <taxon>Caulobacteraceae</taxon>
        <taxon>Caulobacter</taxon>
    </lineage>
</organism>
<keyword id="KW-0687">Ribonucleoprotein</keyword>
<keyword id="KW-0689">Ribosomal protein</keyword>
<keyword id="KW-0694">RNA-binding</keyword>
<keyword id="KW-0699">rRNA-binding</keyword>
<name>RL2_CAUSK</name>
<dbReference type="EMBL" id="CP000927">
    <property type="protein sequence ID" value="ABZ70746.1"/>
    <property type="molecule type" value="Genomic_DNA"/>
</dbReference>
<dbReference type="SMR" id="B0T2C5"/>
<dbReference type="STRING" id="366602.Caul_1617"/>
<dbReference type="KEGG" id="cak:Caul_1617"/>
<dbReference type="eggNOG" id="COG0090">
    <property type="taxonomic scope" value="Bacteria"/>
</dbReference>
<dbReference type="HOGENOM" id="CLU_036235_2_1_5"/>
<dbReference type="OrthoDB" id="9778722at2"/>
<dbReference type="GO" id="GO:0015934">
    <property type="term" value="C:large ribosomal subunit"/>
    <property type="evidence" value="ECO:0007669"/>
    <property type="project" value="InterPro"/>
</dbReference>
<dbReference type="GO" id="GO:0019843">
    <property type="term" value="F:rRNA binding"/>
    <property type="evidence" value="ECO:0007669"/>
    <property type="project" value="UniProtKB-UniRule"/>
</dbReference>
<dbReference type="GO" id="GO:0003735">
    <property type="term" value="F:structural constituent of ribosome"/>
    <property type="evidence" value="ECO:0007669"/>
    <property type="project" value="InterPro"/>
</dbReference>
<dbReference type="GO" id="GO:0016740">
    <property type="term" value="F:transferase activity"/>
    <property type="evidence" value="ECO:0007669"/>
    <property type="project" value="InterPro"/>
</dbReference>
<dbReference type="GO" id="GO:0002181">
    <property type="term" value="P:cytoplasmic translation"/>
    <property type="evidence" value="ECO:0007669"/>
    <property type="project" value="TreeGrafter"/>
</dbReference>
<dbReference type="FunFam" id="2.30.30.30:FF:000001">
    <property type="entry name" value="50S ribosomal protein L2"/>
    <property type="match status" value="1"/>
</dbReference>
<dbReference type="FunFam" id="4.10.950.10:FF:000001">
    <property type="entry name" value="50S ribosomal protein L2"/>
    <property type="match status" value="1"/>
</dbReference>
<dbReference type="Gene3D" id="2.30.30.30">
    <property type="match status" value="1"/>
</dbReference>
<dbReference type="Gene3D" id="2.40.50.140">
    <property type="entry name" value="Nucleic acid-binding proteins"/>
    <property type="match status" value="1"/>
</dbReference>
<dbReference type="Gene3D" id="4.10.950.10">
    <property type="entry name" value="Ribosomal protein L2, domain 3"/>
    <property type="match status" value="1"/>
</dbReference>
<dbReference type="HAMAP" id="MF_01320_B">
    <property type="entry name" value="Ribosomal_uL2_B"/>
    <property type="match status" value="1"/>
</dbReference>
<dbReference type="InterPro" id="IPR012340">
    <property type="entry name" value="NA-bd_OB-fold"/>
</dbReference>
<dbReference type="InterPro" id="IPR014722">
    <property type="entry name" value="Rib_uL2_dom2"/>
</dbReference>
<dbReference type="InterPro" id="IPR002171">
    <property type="entry name" value="Ribosomal_uL2"/>
</dbReference>
<dbReference type="InterPro" id="IPR005880">
    <property type="entry name" value="Ribosomal_uL2_bac/org-type"/>
</dbReference>
<dbReference type="InterPro" id="IPR022669">
    <property type="entry name" value="Ribosomal_uL2_C"/>
</dbReference>
<dbReference type="InterPro" id="IPR022671">
    <property type="entry name" value="Ribosomal_uL2_CS"/>
</dbReference>
<dbReference type="InterPro" id="IPR014726">
    <property type="entry name" value="Ribosomal_uL2_dom3"/>
</dbReference>
<dbReference type="InterPro" id="IPR022666">
    <property type="entry name" value="Ribosomal_uL2_RNA-bd_dom"/>
</dbReference>
<dbReference type="InterPro" id="IPR008991">
    <property type="entry name" value="Translation_prot_SH3-like_sf"/>
</dbReference>
<dbReference type="NCBIfam" id="TIGR01171">
    <property type="entry name" value="rplB_bact"/>
    <property type="match status" value="1"/>
</dbReference>
<dbReference type="PANTHER" id="PTHR13691:SF5">
    <property type="entry name" value="LARGE RIBOSOMAL SUBUNIT PROTEIN UL2M"/>
    <property type="match status" value="1"/>
</dbReference>
<dbReference type="PANTHER" id="PTHR13691">
    <property type="entry name" value="RIBOSOMAL PROTEIN L2"/>
    <property type="match status" value="1"/>
</dbReference>
<dbReference type="Pfam" id="PF00181">
    <property type="entry name" value="Ribosomal_L2"/>
    <property type="match status" value="1"/>
</dbReference>
<dbReference type="Pfam" id="PF03947">
    <property type="entry name" value="Ribosomal_L2_C"/>
    <property type="match status" value="1"/>
</dbReference>
<dbReference type="PIRSF" id="PIRSF002158">
    <property type="entry name" value="Ribosomal_L2"/>
    <property type="match status" value="1"/>
</dbReference>
<dbReference type="SMART" id="SM01383">
    <property type="entry name" value="Ribosomal_L2"/>
    <property type="match status" value="1"/>
</dbReference>
<dbReference type="SMART" id="SM01382">
    <property type="entry name" value="Ribosomal_L2_C"/>
    <property type="match status" value="1"/>
</dbReference>
<dbReference type="SUPFAM" id="SSF50249">
    <property type="entry name" value="Nucleic acid-binding proteins"/>
    <property type="match status" value="1"/>
</dbReference>
<dbReference type="SUPFAM" id="SSF50104">
    <property type="entry name" value="Translation proteins SH3-like domain"/>
    <property type="match status" value="1"/>
</dbReference>
<dbReference type="PROSITE" id="PS00467">
    <property type="entry name" value="RIBOSOMAL_L2"/>
    <property type="match status" value="1"/>
</dbReference>
<feature type="chain" id="PRO_1000086322" description="Large ribosomal subunit protein uL2">
    <location>
        <begin position="1"/>
        <end position="279"/>
    </location>
</feature>
<feature type="region of interest" description="Disordered" evidence="2">
    <location>
        <begin position="222"/>
        <end position="264"/>
    </location>
</feature>
<sequence>MALKHFNPTSPGQRGLVLIDRSELHKGRPEKKLVEGLTKSGGRGGNGRIAVRFRGGGAKRLYRLVDFKRRKQGVATVVRLEYDPNRTAFIALIKYQADGELAYILAPQRLKAGDEVVTADKVDVKPGNTSPLRTMPIGTIIHNVELKPAKGGQIARSAGAYAQLVGRDAGYAQIRLNSGELRMVLDTCLATVGAVSNPDHSNQNLGKAGRVRHMGRRPHVRGVAMNPVDHPHGGGEGRTSGGRNPVTPAGKPTKGAKTRVNKATDKFIIRSRHKAKKGR</sequence>
<reference key="1">
    <citation type="submission" date="2008-01" db="EMBL/GenBank/DDBJ databases">
        <title>Complete sequence of chromosome of Caulobacter sp. K31.</title>
        <authorList>
            <consortium name="US DOE Joint Genome Institute"/>
            <person name="Copeland A."/>
            <person name="Lucas S."/>
            <person name="Lapidus A."/>
            <person name="Barry K."/>
            <person name="Glavina del Rio T."/>
            <person name="Dalin E."/>
            <person name="Tice H."/>
            <person name="Pitluck S."/>
            <person name="Bruce D."/>
            <person name="Goodwin L."/>
            <person name="Thompson L.S."/>
            <person name="Brettin T."/>
            <person name="Detter J.C."/>
            <person name="Han C."/>
            <person name="Schmutz J."/>
            <person name="Larimer F."/>
            <person name="Land M."/>
            <person name="Hauser L."/>
            <person name="Kyrpides N."/>
            <person name="Kim E."/>
            <person name="Stephens C."/>
            <person name="Richardson P."/>
        </authorList>
    </citation>
    <scope>NUCLEOTIDE SEQUENCE [LARGE SCALE GENOMIC DNA]</scope>
    <source>
        <strain>K31</strain>
    </source>
</reference>
<proteinExistence type="inferred from homology"/>
<gene>
    <name evidence="1" type="primary">rplB</name>
    <name type="ordered locus">Caul_1617</name>
</gene>
<accession>B0T2C5</accession>
<protein>
    <recommendedName>
        <fullName evidence="1">Large ribosomal subunit protein uL2</fullName>
    </recommendedName>
    <alternativeName>
        <fullName evidence="3">50S ribosomal protein L2</fullName>
    </alternativeName>
</protein>
<comment type="function">
    <text evidence="1">One of the primary rRNA binding proteins. Required for association of the 30S and 50S subunits to form the 70S ribosome, for tRNA binding and peptide bond formation. It has been suggested to have peptidyltransferase activity; this is somewhat controversial. Makes several contacts with the 16S rRNA in the 70S ribosome.</text>
</comment>
<comment type="subunit">
    <text evidence="1">Part of the 50S ribosomal subunit. Forms a bridge to the 30S subunit in the 70S ribosome.</text>
</comment>
<comment type="similarity">
    <text evidence="1">Belongs to the universal ribosomal protein uL2 family.</text>
</comment>
<evidence type="ECO:0000255" key="1">
    <source>
        <dbReference type="HAMAP-Rule" id="MF_01320"/>
    </source>
</evidence>
<evidence type="ECO:0000256" key="2">
    <source>
        <dbReference type="SAM" id="MobiDB-lite"/>
    </source>
</evidence>
<evidence type="ECO:0000305" key="3"/>